<dbReference type="EMBL" id="CP000915">
    <property type="protein sequence ID" value="ACD31161.1"/>
    <property type="molecule type" value="Genomic_DNA"/>
</dbReference>
<dbReference type="SMR" id="B2SDE7"/>
<dbReference type="KEGG" id="ftm:FTM_1315"/>
<dbReference type="HOGENOM" id="CLU_095424_4_1_6"/>
<dbReference type="GO" id="GO:0022625">
    <property type="term" value="C:cytosolic large ribosomal subunit"/>
    <property type="evidence" value="ECO:0007669"/>
    <property type="project" value="TreeGrafter"/>
</dbReference>
<dbReference type="GO" id="GO:0003735">
    <property type="term" value="F:structural constituent of ribosome"/>
    <property type="evidence" value="ECO:0007669"/>
    <property type="project" value="InterPro"/>
</dbReference>
<dbReference type="GO" id="GO:0006412">
    <property type="term" value="P:translation"/>
    <property type="evidence" value="ECO:0007669"/>
    <property type="project" value="UniProtKB-UniRule"/>
</dbReference>
<dbReference type="FunFam" id="2.40.50.100:FF:000001">
    <property type="entry name" value="50S ribosomal protein L27"/>
    <property type="match status" value="1"/>
</dbReference>
<dbReference type="Gene3D" id="2.40.50.100">
    <property type="match status" value="1"/>
</dbReference>
<dbReference type="HAMAP" id="MF_00539">
    <property type="entry name" value="Ribosomal_bL27"/>
    <property type="match status" value="1"/>
</dbReference>
<dbReference type="InterPro" id="IPR001684">
    <property type="entry name" value="Ribosomal_bL27"/>
</dbReference>
<dbReference type="InterPro" id="IPR018261">
    <property type="entry name" value="Ribosomal_bL27_CS"/>
</dbReference>
<dbReference type="NCBIfam" id="TIGR00062">
    <property type="entry name" value="L27"/>
    <property type="match status" value="1"/>
</dbReference>
<dbReference type="PANTHER" id="PTHR15893:SF0">
    <property type="entry name" value="LARGE RIBOSOMAL SUBUNIT PROTEIN BL27M"/>
    <property type="match status" value="1"/>
</dbReference>
<dbReference type="PANTHER" id="PTHR15893">
    <property type="entry name" value="RIBOSOMAL PROTEIN L27"/>
    <property type="match status" value="1"/>
</dbReference>
<dbReference type="Pfam" id="PF01016">
    <property type="entry name" value="Ribosomal_L27"/>
    <property type="match status" value="1"/>
</dbReference>
<dbReference type="PRINTS" id="PR00063">
    <property type="entry name" value="RIBOSOMALL27"/>
</dbReference>
<dbReference type="SUPFAM" id="SSF110324">
    <property type="entry name" value="Ribosomal L27 protein-like"/>
    <property type="match status" value="1"/>
</dbReference>
<dbReference type="PROSITE" id="PS00831">
    <property type="entry name" value="RIBOSOMAL_L27"/>
    <property type="match status" value="1"/>
</dbReference>
<organism>
    <name type="scientific">Francisella tularensis subsp. mediasiatica (strain FSC147)</name>
    <dbReference type="NCBI Taxonomy" id="441952"/>
    <lineage>
        <taxon>Bacteria</taxon>
        <taxon>Pseudomonadati</taxon>
        <taxon>Pseudomonadota</taxon>
        <taxon>Gammaproteobacteria</taxon>
        <taxon>Thiotrichales</taxon>
        <taxon>Francisellaceae</taxon>
        <taxon>Francisella</taxon>
    </lineage>
</organism>
<name>RL27_FRATM</name>
<protein>
    <recommendedName>
        <fullName evidence="1">Large ribosomal subunit protein bL27</fullName>
    </recommendedName>
    <alternativeName>
        <fullName evidence="3">50S ribosomal protein L27</fullName>
    </alternativeName>
</protein>
<sequence length="84" mass="9069">MAHKKAGGSTRNGRDSNPKYLGVKRYGGEFVKAGTIIIRQRGTKTHPGVNVGCGKDHTLFALKDGTVKFHTGGALNRKFVSIEE</sequence>
<comment type="similarity">
    <text evidence="1">Belongs to the bacterial ribosomal protein bL27 family.</text>
</comment>
<reference key="1">
    <citation type="journal article" date="2009" name="PLoS Pathog.">
        <title>Molecular evolutionary consequences of niche restriction in Francisella tularensis, a facultative intracellular pathogen.</title>
        <authorList>
            <person name="Larsson P."/>
            <person name="Elfsmark D."/>
            <person name="Svensson K."/>
            <person name="Wikstroem P."/>
            <person name="Forsman M."/>
            <person name="Brettin T."/>
            <person name="Keim P."/>
            <person name="Johansson A."/>
        </authorList>
    </citation>
    <scope>NUCLEOTIDE SEQUENCE [LARGE SCALE GENOMIC DNA]</scope>
    <source>
        <strain>FSC147</strain>
    </source>
</reference>
<accession>B2SDE7</accession>
<proteinExistence type="inferred from homology"/>
<gene>
    <name evidence="1" type="primary">rpmA</name>
    <name type="ordered locus">FTM_1315</name>
</gene>
<keyword id="KW-0687">Ribonucleoprotein</keyword>
<keyword id="KW-0689">Ribosomal protein</keyword>
<evidence type="ECO:0000255" key="1">
    <source>
        <dbReference type="HAMAP-Rule" id="MF_00539"/>
    </source>
</evidence>
<evidence type="ECO:0000256" key="2">
    <source>
        <dbReference type="SAM" id="MobiDB-lite"/>
    </source>
</evidence>
<evidence type="ECO:0000305" key="3"/>
<feature type="chain" id="PRO_1000128753" description="Large ribosomal subunit protein bL27">
    <location>
        <begin position="1"/>
        <end position="84"/>
    </location>
</feature>
<feature type="region of interest" description="Disordered" evidence="2">
    <location>
        <begin position="1"/>
        <end position="20"/>
    </location>
</feature>